<gene>
    <name type="primary">nma111</name>
    <name type="ORF">NFIA_059600</name>
</gene>
<organism>
    <name type="scientific">Neosartorya fischeri (strain ATCC 1020 / DSM 3700 / CBS 544.65 / FGSC A1164 / JCM 1740 / NRRL 181 / WB 181)</name>
    <name type="common">Aspergillus fischerianus</name>
    <dbReference type="NCBI Taxonomy" id="331117"/>
    <lineage>
        <taxon>Eukaryota</taxon>
        <taxon>Fungi</taxon>
        <taxon>Dikarya</taxon>
        <taxon>Ascomycota</taxon>
        <taxon>Pezizomycotina</taxon>
        <taxon>Eurotiomycetes</taxon>
        <taxon>Eurotiomycetidae</taxon>
        <taxon>Eurotiales</taxon>
        <taxon>Aspergillaceae</taxon>
        <taxon>Aspergillus</taxon>
        <taxon>Aspergillus subgen. Fumigati</taxon>
    </lineage>
</organism>
<dbReference type="EC" id="3.4.21.-"/>
<dbReference type="EMBL" id="DS027698">
    <property type="protein sequence ID" value="EAW16606.1"/>
    <property type="status" value="ALT_INIT"/>
    <property type="molecule type" value="Genomic_DNA"/>
</dbReference>
<dbReference type="RefSeq" id="XP_001258503.1">
    <property type="nucleotide sequence ID" value="XM_001258502.1"/>
</dbReference>
<dbReference type="SMR" id="A1DP85"/>
<dbReference type="STRING" id="331117.A1DP85"/>
<dbReference type="EnsemblFungi" id="EAW16606">
    <property type="protein sequence ID" value="EAW16606"/>
    <property type="gene ID" value="NFIA_059600"/>
</dbReference>
<dbReference type="GeneID" id="4585019"/>
<dbReference type="KEGG" id="nfi:NFIA_059600"/>
<dbReference type="VEuPathDB" id="FungiDB:NFIA_059600"/>
<dbReference type="eggNOG" id="KOG1421">
    <property type="taxonomic scope" value="Eukaryota"/>
</dbReference>
<dbReference type="OrthoDB" id="4217619at2759"/>
<dbReference type="Proteomes" id="UP000006702">
    <property type="component" value="Unassembled WGS sequence"/>
</dbReference>
<dbReference type="GO" id="GO:0005634">
    <property type="term" value="C:nucleus"/>
    <property type="evidence" value="ECO:0007669"/>
    <property type="project" value="UniProtKB-SubCell"/>
</dbReference>
<dbReference type="GO" id="GO:0004252">
    <property type="term" value="F:serine-type endopeptidase activity"/>
    <property type="evidence" value="ECO:0007669"/>
    <property type="project" value="InterPro"/>
</dbReference>
<dbReference type="GO" id="GO:0006915">
    <property type="term" value="P:apoptotic process"/>
    <property type="evidence" value="ECO:0007669"/>
    <property type="project" value="UniProtKB-KW"/>
</dbReference>
<dbReference type="GO" id="GO:0006508">
    <property type="term" value="P:proteolysis"/>
    <property type="evidence" value="ECO:0007669"/>
    <property type="project" value="UniProtKB-KW"/>
</dbReference>
<dbReference type="CDD" id="cd06786">
    <property type="entry name" value="cpPDZ1_ScNma111-like"/>
    <property type="match status" value="1"/>
</dbReference>
<dbReference type="CDD" id="cd10827">
    <property type="entry name" value="cpPDZ3_ScNma111-like"/>
    <property type="match status" value="1"/>
</dbReference>
<dbReference type="CDD" id="cd06719">
    <property type="entry name" value="PDZ2-4_Nma111p-like"/>
    <property type="match status" value="2"/>
</dbReference>
<dbReference type="Gene3D" id="2.30.42.10">
    <property type="match status" value="2"/>
</dbReference>
<dbReference type="Gene3D" id="2.40.10.120">
    <property type="match status" value="2"/>
</dbReference>
<dbReference type="InterPro" id="IPR001478">
    <property type="entry name" value="PDZ"/>
</dbReference>
<dbReference type="InterPro" id="IPR025926">
    <property type="entry name" value="PDZ-like_dom"/>
</dbReference>
<dbReference type="InterPro" id="IPR041489">
    <property type="entry name" value="PDZ_6"/>
</dbReference>
<dbReference type="InterPro" id="IPR036034">
    <property type="entry name" value="PDZ_sf"/>
</dbReference>
<dbReference type="InterPro" id="IPR009003">
    <property type="entry name" value="Peptidase_S1_PA"/>
</dbReference>
<dbReference type="InterPro" id="IPR001940">
    <property type="entry name" value="Peptidase_S1C"/>
</dbReference>
<dbReference type="PANTHER" id="PTHR46366">
    <property type="entry name" value="PRO-APOPTOTIC SERINE PROTEASE NMA111"/>
    <property type="match status" value="1"/>
</dbReference>
<dbReference type="PANTHER" id="PTHR46366:SF8">
    <property type="entry name" value="PRO-APOPTOTIC SERINE PROTEASE NMA111"/>
    <property type="match status" value="1"/>
</dbReference>
<dbReference type="Pfam" id="PF12812">
    <property type="entry name" value="PDZ_1"/>
    <property type="match status" value="2"/>
</dbReference>
<dbReference type="Pfam" id="PF17820">
    <property type="entry name" value="PDZ_6"/>
    <property type="match status" value="1"/>
</dbReference>
<dbReference type="Pfam" id="PF13365">
    <property type="entry name" value="Trypsin_2"/>
    <property type="match status" value="1"/>
</dbReference>
<dbReference type="PRINTS" id="PR00834">
    <property type="entry name" value="PROTEASES2C"/>
</dbReference>
<dbReference type="SMART" id="SM00228">
    <property type="entry name" value="PDZ"/>
    <property type="match status" value="2"/>
</dbReference>
<dbReference type="SUPFAM" id="SSF50156">
    <property type="entry name" value="PDZ domain-like"/>
    <property type="match status" value="3"/>
</dbReference>
<dbReference type="SUPFAM" id="SSF50494">
    <property type="entry name" value="Trypsin-like serine proteases"/>
    <property type="match status" value="2"/>
</dbReference>
<evidence type="ECO:0000250" key="1"/>
<evidence type="ECO:0000255" key="2"/>
<evidence type="ECO:0000256" key="3">
    <source>
        <dbReference type="SAM" id="MobiDB-lite"/>
    </source>
</evidence>
<evidence type="ECO:0000305" key="4"/>
<protein>
    <recommendedName>
        <fullName>Pro-apoptotic serine protease nma111</fullName>
        <ecNumber>3.4.21.-</ecNumber>
    </recommendedName>
</protein>
<keyword id="KW-0053">Apoptosis</keyword>
<keyword id="KW-0378">Hydrolase</keyword>
<keyword id="KW-0539">Nucleus</keyword>
<keyword id="KW-0645">Protease</keyword>
<keyword id="KW-1185">Reference proteome</keyword>
<keyword id="KW-0677">Repeat</keyword>
<keyword id="KW-0720">Serine protease</keyword>
<name>NM111_NEOFI</name>
<proteinExistence type="inferred from homology"/>
<comment type="function">
    <text evidence="1">Nuclear serine protease which mediates apoptosis.</text>
</comment>
<comment type="subcellular location">
    <subcellularLocation>
        <location evidence="1">Nucleus</location>
    </subcellularLocation>
</comment>
<comment type="similarity">
    <text evidence="4">Belongs to the peptidase S1C family.</text>
</comment>
<comment type="sequence caution" evidence="4">
    <conflict type="erroneous initiation">
        <sequence resource="EMBL-CDS" id="EAW16606"/>
    </conflict>
</comment>
<reference key="1">
    <citation type="journal article" date="2008" name="PLoS Genet.">
        <title>Genomic islands in the pathogenic filamentous fungus Aspergillus fumigatus.</title>
        <authorList>
            <person name="Fedorova N.D."/>
            <person name="Khaldi N."/>
            <person name="Joardar V.S."/>
            <person name="Maiti R."/>
            <person name="Amedeo P."/>
            <person name="Anderson M.J."/>
            <person name="Crabtree J."/>
            <person name="Silva J.C."/>
            <person name="Badger J.H."/>
            <person name="Albarraq A."/>
            <person name="Angiuoli S."/>
            <person name="Bussey H."/>
            <person name="Bowyer P."/>
            <person name="Cotty P.J."/>
            <person name="Dyer P.S."/>
            <person name="Egan A."/>
            <person name="Galens K."/>
            <person name="Fraser-Liggett C.M."/>
            <person name="Haas B.J."/>
            <person name="Inman J.M."/>
            <person name="Kent R."/>
            <person name="Lemieux S."/>
            <person name="Malavazi I."/>
            <person name="Orvis J."/>
            <person name="Roemer T."/>
            <person name="Ronning C.M."/>
            <person name="Sundaram J.P."/>
            <person name="Sutton G."/>
            <person name="Turner G."/>
            <person name="Venter J.C."/>
            <person name="White O.R."/>
            <person name="Whitty B.R."/>
            <person name="Youngman P."/>
            <person name="Wolfe K.H."/>
            <person name="Goldman G.H."/>
            <person name="Wortman J.R."/>
            <person name="Jiang B."/>
            <person name="Denning D.W."/>
            <person name="Nierman W.C."/>
        </authorList>
    </citation>
    <scope>NUCLEOTIDE SEQUENCE [LARGE SCALE GENOMIC DNA]</scope>
    <source>
        <strain>ATCC 1020 / DSM 3700 / CBS 544.65 / FGSC A1164 / JCM 1740 / NRRL 181 / WB 181</strain>
    </source>
</reference>
<sequence>MDLNGETSTKRKRSSVAAPAERPAKHLKPESSTLTPGDATPANGTVYDVEDEEDTGRVMPIGPAQADSPEWQATIEKVVKSVVSIHFCQTCSFDTDLSMSSQATGFVVDAERGYILTNRHVVCAGPFWGYCIFDNHEECDVRPVYRDPVHDFGILKFDPKAIRYMELTELKLRPEAARVGCEIRVVGNDAGEKLSILSGVISRLDRNAPEYGDGYCDFNTNYIQAAAAASGGSSGSPVVNIDGHAIALQAGGRADGAATDYFLPLDRPLRALECIRRGEPVARGTIQTQWILKPFDECRRLGLTPEWEAAVRKASPHETSMLVAEIILPEGPADGKLEEGDVLLQVNGELLTQFIRLDDILDSSVGKTVRLLVQRGGQNVEVECEVGDLHAITPDRFVTVAGGTFHNLSYQQARLYAIAARGVYVCEAAGSFKLENTLSGWIIDAVDKRPTRNLDEFTEVMKTIPDRARVVISYRHIRDLHTRGTSIVYIDRHWHPKMRMAIRNDETGLWDFSDLADPVPAETPVPRKADFIQLDGVSQPAVADIVRSFVRVSCTMPLKLDGYPQAKKTGFGLVIDAEKGLVVVSRAIVPYNLCDINITVADSIIVAAKVIFLHPLQNYTIIQYDPSLVQAPVQSAKLSTEYIKQGQETIFVGFNQNFRIVVAKTAVTDITTVSIPANASAPRYRAINLDAITVDTGLSGQCTNGVLIGEDGVVQALWLNYLGERTPSSHKDVEYHLGFATPALLPVTSKIQQGIIPKLRILNMESYVVQMSQARIMGVSEEWIQKVAQANPSRHQLFMVRKVDCPPPQFTDNADSLQEGDIILTLDGQLITRVSELDKMYEKEVLDALIVRNGQEMHLKLPTVPTEDLETDRAVVFCGAVLQKPHHAVRQQISKLHSEVYVSARSRGSPAYQYGLAPTNFITAVNGVPTPNLDSFVREVSKIPDNTYFRLRAVTFDNVPWVVTMKKNDHYFPMSEYVKDPSQPLGWRTVSHDRDRHKDGITPDAANLNPDAMDEVYEEVSDVEPEVD</sequence>
<accession>A1DP85</accession>
<feature type="chain" id="PRO_0000320356" description="Pro-apoptotic serine protease nma111">
    <location>
        <begin position="1"/>
        <end position="1028"/>
    </location>
</feature>
<feature type="domain" description="PDZ 1">
    <location>
        <begin position="305"/>
        <end position="377"/>
    </location>
</feature>
<feature type="domain" description="PDZ 2">
    <location>
        <begin position="876"/>
        <end position="957"/>
    </location>
</feature>
<feature type="region of interest" description="Disordered" evidence="3">
    <location>
        <begin position="1"/>
        <end position="46"/>
    </location>
</feature>
<feature type="region of interest" description="Serine protease">
    <location>
        <begin position="82"/>
        <end position="266"/>
    </location>
</feature>
<feature type="region of interest" description="Disordered" evidence="3">
    <location>
        <begin position="989"/>
        <end position="1028"/>
    </location>
</feature>
<feature type="compositionally biased region" description="Basic and acidic residues" evidence="3">
    <location>
        <begin position="990"/>
        <end position="1001"/>
    </location>
</feature>
<feature type="compositionally biased region" description="Acidic residues" evidence="3">
    <location>
        <begin position="1012"/>
        <end position="1028"/>
    </location>
</feature>
<feature type="active site" description="Charge relay system" evidence="2">
    <location>
        <position position="120"/>
    </location>
</feature>
<feature type="active site" description="Charge relay system" evidence="2">
    <location>
        <position position="151"/>
    </location>
</feature>
<feature type="active site" description="Charge relay system" evidence="2">
    <location>
        <position position="233"/>
    </location>
</feature>